<feature type="chain" id="PRO_1000099842" description="Anthranilate phosphoribosyltransferase">
    <location>
        <begin position="1"/>
        <end position="332"/>
    </location>
</feature>
<feature type="binding site" evidence="1">
    <location>
        <position position="78"/>
    </location>
    <ligand>
        <name>5-phospho-alpha-D-ribose 1-diphosphate</name>
        <dbReference type="ChEBI" id="CHEBI:58017"/>
    </ligand>
</feature>
<feature type="binding site" evidence="1">
    <location>
        <position position="78"/>
    </location>
    <ligand>
        <name>anthranilate</name>
        <dbReference type="ChEBI" id="CHEBI:16567"/>
        <label>1</label>
    </ligand>
</feature>
<feature type="binding site" evidence="1">
    <location>
        <begin position="81"/>
        <end position="82"/>
    </location>
    <ligand>
        <name>5-phospho-alpha-D-ribose 1-diphosphate</name>
        <dbReference type="ChEBI" id="CHEBI:58017"/>
    </ligand>
</feature>
<feature type="binding site" evidence="1">
    <location>
        <position position="86"/>
    </location>
    <ligand>
        <name>5-phospho-alpha-D-ribose 1-diphosphate</name>
        <dbReference type="ChEBI" id="CHEBI:58017"/>
    </ligand>
</feature>
<feature type="binding site" evidence="1">
    <location>
        <begin position="88"/>
        <end position="91"/>
    </location>
    <ligand>
        <name>5-phospho-alpha-D-ribose 1-diphosphate</name>
        <dbReference type="ChEBI" id="CHEBI:58017"/>
    </ligand>
</feature>
<feature type="binding site" evidence="1">
    <location>
        <position position="90"/>
    </location>
    <ligand>
        <name>Mg(2+)</name>
        <dbReference type="ChEBI" id="CHEBI:18420"/>
        <label>1</label>
    </ligand>
</feature>
<feature type="binding site" evidence="1">
    <location>
        <begin position="106"/>
        <end position="114"/>
    </location>
    <ligand>
        <name>5-phospho-alpha-D-ribose 1-diphosphate</name>
        <dbReference type="ChEBI" id="CHEBI:58017"/>
    </ligand>
</feature>
<feature type="binding site" evidence="1">
    <location>
        <position position="109"/>
    </location>
    <ligand>
        <name>anthranilate</name>
        <dbReference type="ChEBI" id="CHEBI:16567"/>
        <label>1</label>
    </ligand>
</feature>
<feature type="binding site" evidence="1">
    <location>
        <position position="118"/>
    </location>
    <ligand>
        <name>5-phospho-alpha-D-ribose 1-diphosphate</name>
        <dbReference type="ChEBI" id="CHEBI:58017"/>
    </ligand>
</feature>
<feature type="binding site" evidence="1">
    <location>
        <position position="163"/>
    </location>
    <ligand>
        <name>anthranilate</name>
        <dbReference type="ChEBI" id="CHEBI:16567"/>
        <label>2</label>
    </ligand>
</feature>
<feature type="binding site" evidence="1">
    <location>
        <position position="222"/>
    </location>
    <ligand>
        <name>Mg(2+)</name>
        <dbReference type="ChEBI" id="CHEBI:18420"/>
        <label>2</label>
    </ligand>
</feature>
<feature type="binding site" evidence="1">
    <location>
        <position position="223"/>
    </location>
    <ligand>
        <name>Mg(2+)</name>
        <dbReference type="ChEBI" id="CHEBI:18420"/>
        <label>1</label>
    </ligand>
</feature>
<feature type="binding site" evidence="1">
    <location>
        <position position="223"/>
    </location>
    <ligand>
        <name>Mg(2+)</name>
        <dbReference type="ChEBI" id="CHEBI:18420"/>
        <label>2</label>
    </ligand>
</feature>
<accession>Q2FH67</accession>
<dbReference type="EC" id="2.4.2.18" evidence="1"/>
<dbReference type="EMBL" id="CP000255">
    <property type="protein sequence ID" value="ABD22045.1"/>
    <property type="molecule type" value="Genomic_DNA"/>
</dbReference>
<dbReference type="RefSeq" id="WP_000173832.1">
    <property type="nucleotide sequence ID" value="NZ_CP027476.1"/>
</dbReference>
<dbReference type="SMR" id="Q2FH67"/>
<dbReference type="KEGG" id="saa:SAUSA300_1264"/>
<dbReference type="HOGENOM" id="CLU_034315_3_0_9"/>
<dbReference type="UniPathway" id="UPA00035">
    <property type="reaction ID" value="UER00041"/>
</dbReference>
<dbReference type="Proteomes" id="UP000001939">
    <property type="component" value="Chromosome"/>
</dbReference>
<dbReference type="GO" id="GO:0005829">
    <property type="term" value="C:cytosol"/>
    <property type="evidence" value="ECO:0007669"/>
    <property type="project" value="TreeGrafter"/>
</dbReference>
<dbReference type="GO" id="GO:0004048">
    <property type="term" value="F:anthranilate phosphoribosyltransferase activity"/>
    <property type="evidence" value="ECO:0007669"/>
    <property type="project" value="UniProtKB-UniRule"/>
</dbReference>
<dbReference type="GO" id="GO:0000287">
    <property type="term" value="F:magnesium ion binding"/>
    <property type="evidence" value="ECO:0007669"/>
    <property type="project" value="UniProtKB-UniRule"/>
</dbReference>
<dbReference type="GO" id="GO:0000162">
    <property type="term" value="P:L-tryptophan biosynthetic process"/>
    <property type="evidence" value="ECO:0007669"/>
    <property type="project" value="UniProtKB-UniRule"/>
</dbReference>
<dbReference type="FunFam" id="3.40.1030.10:FF:000009">
    <property type="entry name" value="Anthranilate phosphoribosyltransferase"/>
    <property type="match status" value="1"/>
</dbReference>
<dbReference type="Gene3D" id="3.40.1030.10">
    <property type="entry name" value="Nucleoside phosphorylase/phosphoribosyltransferase catalytic domain"/>
    <property type="match status" value="1"/>
</dbReference>
<dbReference type="HAMAP" id="MF_00211">
    <property type="entry name" value="TrpD"/>
    <property type="match status" value="1"/>
</dbReference>
<dbReference type="InterPro" id="IPR005940">
    <property type="entry name" value="Anthranilate_Pribosyl_Tfrase"/>
</dbReference>
<dbReference type="InterPro" id="IPR000312">
    <property type="entry name" value="Glycosyl_Trfase_fam3"/>
</dbReference>
<dbReference type="InterPro" id="IPR035902">
    <property type="entry name" value="Nuc_phospho_transferase"/>
</dbReference>
<dbReference type="NCBIfam" id="TIGR01245">
    <property type="entry name" value="trpD"/>
    <property type="match status" value="1"/>
</dbReference>
<dbReference type="PANTHER" id="PTHR43285">
    <property type="entry name" value="ANTHRANILATE PHOSPHORIBOSYLTRANSFERASE"/>
    <property type="match status" value="1"/>
</dbReference>
<dbReference type="PANTHER" id="PTHR43285:SF2">
    <property type="entry name" value="ANTHRANILATE PHOSPHORIBOSYLTRANSFERASE"/>
    <property type="match status" value="1"/>
</dbReference>
<dbReference type="Pfam" id="PF00591">
    <property type="entry name" value="Glycos_transf_3"/>
    <property type="match status" value="1"/>
</dbReference>
<dbReference type="SUPFAM" id="SSF52418">
    <property type="entry name" value="Nucleoside phosphorylase/phosphoribosyltransferase catalytic domain"/>
    <property type="match status" value="1"/>
</dbReference>
<keyword id="KW-0028">Amino-acid biosynthesis</keyword>
<keyword id="KW-0057">Aromatic amino acid biosynthesis</keyword>
<keyword id="KW-0328">Glycosyltransferase</keyword>
<keyword id="KW-0460">Magnesium</keyword>
<keyword id="KW-0479">Metal-binding</keyword>
<keyword id="KW-0808">Transferase</keyword>
<keyword id="KW-0822">Tryptophan biosynthesis</keyword>
<gene>
    <name evidence="1" type="primary">trpD</name>
    <name type="ordered locus">SAUSA300_1264</name>
</gene>
<proteinExistence type="inferred from homology"/>
<name>TRPD_STAA3</name>
<evidence type="ECO:0000255" key="1">
    <source>
        <dbReference type="HAMAP-Rule" id="MF_00211"/>
    </source>
</evidence>
<sequence>MTLLTRIKTETILLESDIKELIDILISPSIGTDIKYELLSSYSEREIQQQELTYIVRSLINTMYPHQPCYEGAMCVCGTGGDKSNSFNISTTVAFVVASAGVKVIKHGNKSITSNSGSTDLLNQMNIQTTTVDDTPNQLNEKDLVFIGATESYPIMKYMQPVRKMIGKPTILNLVGPLINPYHLTYQMVGVFDPTKLKLVAKTIKDLGRKRAIVLHGANGMDEATLSGDNLIYELTEDGEIKNYTLNATDYGLKHAPNSDFKGGSPEENLAISLNILNGKDQSSRRDVVLLNAGLSLYVAEKVDTIAEGIELATTLIDNGEALEKYHQMRGE</sequence>
<reference key="1">
    <citation type="journal article" date="2006" name="Lancet">
        <title>Complete genome sequence of USA300, an epidemic clone of community-acquired meticillin-resistant Staphylococcus aureus.</title>
        <authorList>
            <person name="Diep B.A."/>
            <person name="Gill S.R."/>
            <person name="Chang R.F."/>
            <person name="Phan T.H."/>
            <person name="Chen J.H."/>
            <person name="Davidson M.G."/>
            <person name="Lin F."/>
            <person name="Lin J."/>
            <person name="Carleton H.A."/>
            <person name="Mongodin E.F."/>
            <person name="Sensabaugh G.F."/>
            <person name="Perdreau-Remington F."/>
        </authorList>
    </citation>
    <scope>NUCLEOTIDE SEQUENCE [LARGE SCALE GENOMIC DNA]</scope>
    <source>
        <strain>USA300</strain>
    </source>
</reference>
<protein>
    <recommendedName>
        <fullName evidence="1">Anthranilate phosphoribosyltransferase</fullName>
        <ecNumber evidence="1">2.4.2.18</ecNumber>
    </recommendedName>
</protein>
<comment type="function">
    <text evidence="1">Catalyzes the transfer of the phosphoribosyl group of 5-phosphorylribose-1-pyrophosphate (PRPP) to anthranilate to yield N-(5'-phosphoribosyl)-anthranilate (PRA).</text>
</comment>
<comment type="catalytic activity">
    <reaction evidence="1">
        <text>N-(5-phospho-beta-D-ribosyl)anthranilate + diphosphate = 5-phospho-alpha-D-ribose 1-diphosphate + anthranilate</text>
        <dbReference type="Rhea" id="RHEA:11768"/>
        <dbReference type="ChEBI" id="CHEBI:16567"/>
        <dbReference type="ChEBI" id="CHEBI:18277"/>
        <dbReference type="ChEBI" id="CHEBI:33019"/>
        <dbReference type="ChEBI" id="CHEBI:58017"/>
        <dbReference type="EC" id="2.4.2.18"/>
    </reaction>
</comment>
<comment type="cofactor">
    <cofactor evidence="1">
        <name>Mg(2+)</name>
        <dbReference type="ChEBI" id="CHEBI:18420"/>
    </cofactor>
    <text evidence="1">Binds 2 magnesium ions per monomer.</text>
</comment>
<comment type="pathway">
    <text evidence="1">Amino-acid biosynthesis; L-tryptophan biosynthesis; L-tryptophan from chorismate: step 2/5.</text>
</comment>
<comment type="subunit">
    <text evidence="1">Homodimer.</text>
</comment>
<comment type="similarity">
    <text evidence="1">Belongs to the anthranilate phosphoribosyltransferase family.</text>
</comment>
<organism>
    <name type="scientific">Staphylococcus aureus (strain USA300)</name>
    <dbReference type="NCBI Taxonomy" id="367830"/>
    <lineage>
        <taxon>Bacteria</taxon>
        <taxon>Bacillati</taxon>
        <taxon>Bacillota</taxon>
        <taxon>Bacilli</taxon>
        <taxon>Bacillales</taxon>
        <taxon>Staphylococcaceae</taxon>
        <taxon>Staphylococcus</taxon>
    </lineage>
</organism>